<name>TWST1_GORGO</name>
<gene>
    <name type="primary">TWIST1</name>
    <name type="synonym">TWIST</name>
</gene>
<comment type="function">
    <text evidence="2">Acts as a transcriptional regulator. Inhibits myogenesis by sequestrating E proteins, inhibiting trans-activation by MEF2, and inhibiting DNA-binding by MYOD1 through physical interaction. This interaction probably involves the basic domains of both proteins. Also represses expression of pro-inflammatory cytokines such as TNFA and IL1B. Regulates cranial suture patterning and fusion. Activates transcription as a heterodimer with E proteins. Regulates gene expression differentially, depending on dimer composition. Homodimers induce expression of FGFR2 and POSTN while heterodimers repress FGFR2 and POSTN expression and induce THBS1 expression. Heterodimerization is also required for osteoblast differentiation. Represses the activity of the circadian transcriptional activator: NPAS2-BMAL1 heterodimer (By similarity).</text>
</comment>
<comment type="subunit">
    <text evidence="2">Efficient DNA binding requires dimerization with another bHLH protein. Homodimer or heterodimer with E proteins such as TCF3. ID1 binds preferentially to TCF3 but does not interact efficiently with TWIST1 so ID1 levels control the amount of TCF3 available to dimerize with TWIST and thus determine the type of dimer formed (By similarity).</text>
</comment>
<comment type="subcellular location">
    <subcellularLocation>
        <location evidence="3">Nucleus</location>
    </subcellularLocation>
</comment>
<keyword id="KW-0010">Activator</keyword>
<keyword id="KW-0090">Biological rhythms</keyword>
<keyword id="KW-0217">Developmental protein</keyword>
<keyword id="KW-0221">Differentiation</keyword>
<keyword id="KW-0238">DNA-binding</keyword>
<keyword id="KW-0517">Myogenesis</keyword>
<keyword id="KW-0539">Nucleus</keyword>
<keyword id="KW-1185">Reference proteome</keyword>
<keyword id="KW-0678">Repressor</keyword>
<keyword id="KW-0804">Transcription</keyword>
<keyword id="KW-0805">Transcription regulation</keyword>
<dbReference type="EMBL" id="AJ488158">
    <property type="protein sequence ID" value="CAD32472.1"/>
    <property type="molecule type" value="Genomic_DNA"/>
</dbReference>
<dbReference type="SMR" id="Q8MI06"/>
<dbReference type="FunCoup" id="Q8MI06">
    <property type="interactions" value="1225"/>
</dbReference>
<dbReference type="InParanoid" id="Q8MI06"/>
<dbReference type="Proteomes" id="UP000001519">
    <property type="component" value="Unplaced"/>
</dbReference>
<dbReference type="GO" id="GO:0005634">
    <property type="term" value="C:nucleus"/>
    <property type="evidence" value="ECO:0007669"/>
    <property type="project" value="UniProtKB-SubCell"/>
</dbReference>
<dbReference type="GO" id="GO:0000981">
    <property type="term" value="F:DNA-binding transcription factor activity, RNA polymerase II-specific"/>
    <property type="evidence" value="ECO:0000318"/>
    <property type="project" value="GO_Central"/>
</dbReference>
<dbReference type="GO" id="GO:0046983">
    <property type="term" value="F:protein dimerization activity"/>
    <property type="evidence" value="ECO:0007669"/>
    <property type="project" value="InterPro"/>
</dbReference>
<dbReference type="GO" id="GO:0000977">
    <property type="term" value="F:RNA polymerase II transcription regulatory region sequence-specific DNA binding"/>
    <property type="evidence" value="ECO:0000318"/>
    <property type="project" value="GO_Central"/>
</dbReference>
<dbReference type="GO" id="GO:0030154">
    <property type="term" value="P:cell differentiation"/>
    <property type="evidence" value="ECO:0007669"/>
    <property type="project" value="UniProtKB-KW"/>
</dbReference>
<dbReference type="GO" id="GO:0032502">
    <property type="term" value="P:developmental process"/>
    <property type="evidence" value="ECO:0000318"/>
    <property type="project" value="GO_Central"/>
</dbReference>
<dbReference type="GO" id="GO:0007517">
    <property type="term" value="P:muscle organ development"/>
    <property type="evidence" value="ECO:0007669"/>
    <property type="project" value="UniProtKB-KW"/>
</dbReference>
<dbReference type="GO" id="GO:0045892">
    <property type="term" value="P:negative regulation of DNA-templated transcription"/>
    <property type="evidence" value="ECO:0000250"/>
    <property type="project" value="UniProtKB"/>
</dbReference>
<dbReference type="GO" id="GO:0006357">
    <property type="term" value="P:regulation of transcription by RNA polymerase II"/>
    <property type="evidence" value="ECO:0000318"/>
    <property type="project" value="GO_Central"/>
</dbReference>
<dbReference type="GO" id="GO:0048511">
    <property type="term" value="P:rhythmic process"/>
    <property type="evidence" value="ECO:0007669"/>
    <property type="project" value="UniProtKB-KW"/>
</dbReference>
<dbReference type="FunFam" id="4.10.280.10:FF:000030">
    <property type="entry name" value="Twist transcription factor"/>
    <property type="match status" value="1"/>
</dbReference>
<dbReference type="Gene3D" id="4.10.280.10">
    <property type="entry name" value="Helix-loop-helix DNA-binding domain"/>
    <property type="match status" value="1"/>
</dbReference>
<dbReference type="InterPro" id="IPR011598">
    <property type="entry name" value="bHLH_dom"/>
</dbReference>
<dbReference type="InterPro" id="IPR050283">
    <property type="entry name" value="E-box_TF_Regulators"/>
</dbReference>
<dbReference type="InterPro" id="IPR036638">
    <property type="entry name" value="HLH_DNA-bd_sf"/>
</dbReference>
<dbReference type="PANTHER" id="PTHR23349">
    <property type="entry name" value="BASIC HELIX-LOOP-HELIX TRANSCRIPTION FACTOR, TWIST"/>
    <property type="match status" value="1"/>
</dbReference>
<dbReference type="PANTHER" id="PTHR23349:SF64">
    <property type="entry name" value="TWIST-RELATED PROTEIN 1"/>
    <property type="match status" value="1"/>
</dbReference>
<dbReference type="Pfam" id="PF00010">
    <property type="entry name" value="HLH"/>
    <property type="match status" value="1"/>
</dbReference>
<dbReference type="SMART" id="SM00353">
    <property type="entry name" value="HLH"/>
    <property type="match status" value="1"/>
</dbReference>
<dbReference type="SUPFAM" id="SSF47459">
    <property type="entry name" value="HLH, helix-loop-helix DNA-binding domain"/>
    <property type="match status" value="1"/>
</dbReference>
<dbReference type="PROSITE" id="PS50888">
    <property type="entry name" value="BHLH"/>
    <property type="match status" value="1"/>
</dbReference>
<evidence type="ECO:0000250" key="1"/>
<evidence type="ECO:0000250" key="2">
    <source>
        <dbReference type="UniProtKB" id="P26687"/>
    </source>
</evidence>
<evidence type="ECO:0000255" key="3">
    <source>
        <dbReference type="PROSITE-ProRule" id="PRU00981"/>
    </source>
</evidence>
<evidence type="ECO:0000256" key="4">
    <source>
        <dbReference type="SAM" id="MobiDB-lite"/>
    </source>
</evidence>
<organism>
    <name type="scientific">Gorilla gorilla gorilla</name>
    <name type="common">Western lowland gorilla</name>
    <dbReference type="NCBI Taxonomy" id="9595"/>
    <lineage>
        <taxon>Eukaryota</taxon>
        <taxon>Metazoa</taxon>
        <taxon>Chordata</taxon>
        <taxon>Craniata</taxon>
        <taxon>Vertebrata</taxon>
        <taxon>Euteleostomi</taxon>
        <taxon>Mammalia</taxon>
        <taxon>Eutheria</taxon>
        <taxon>Euarchontoglires</taxon>
        <taxon>Primates</taxon>
        <taxon>Haplorrhini</taxon>
        <taxon>Catarrhini</taxon>
        <taxon>Hominidae</taxon>
        <taxon>Gorilla</taxon>
    </lineage>
</organism>
<sequence length="203" mass="21007">MMQDVSSSPVSPADDSLSNSEEEPDRQQPPSGKRGGRKRRSSRRSAGGGAGPGGAASGGAGGGDEPGSPAQGKRGKKSAGCGGGGGGGAGGGGSSSGGGSPQSCEELQTQRVMANVRERQRTQSLNEPFAALRKIIPTLPSDKLSKIQTLKLAARYIDFLYRVLQSDELDSKTASCSYVAHEWLSYAFSVWRMEGAWSMSASH</sequence>
<proteinExistence type="inferred from homology"/>
<feature type="chain" id="PRO_0000127482" description="Twist-related protein 1">
    <location>
        <begin position="1"/>
        <end position="203"/>
    </location>
</feature>
<feature type="domain" description="bHLH" evidence="3">
    <location>
        <begin position="109"/>
        <end position="160"/>
    </location>
</feature>
<feature type="region of interest" description="Disordered" evidence="4">
    <location>
        <begin position="1"/>
        <end position="107"/>
    </location>
</feature>
<feature type="region of interest" description="Sufficient for transactivation activity" evidence="1">
    <location>
        <begin position="162"/>
        <end position="192"/>
    </location>
</feature>
<feature type="compositionally biased region" description="Low complexity" evidence="4">
    <location>
        <begin position="1"/>
        <end position="18"/>
    </location>
</feature>
<feature type="compositionally biased region" description="Basic residues" evidence="4">
    <location>
        <begin position="34"/>
        <end position="43"/>
    </location>
</feature>
<feature type="compositionally biased region" description="Gly residues" evidence="4">
    <location>
        <begin position="46"/>
        <end position="65"/>
    </location>
</feature>
<feature type="compositionally biased region" description="Gly residues" evidence="4">
    <location>
        <begin position="80"/>
        <end position="100"/>
    </location>
</feature>
<accession>Q8MI06</accession>
<reference key="1">
    <citation type="journal article" date="2002" name="Dev. Genes Evol.">
        <title>Natural Twist protein variants in a panel of eleven non-human primates: possible implications of Twist gene-tree for primate species tree.</title>
        <authorList>
            <person name="Gachot-Neveu H."/>
            <person name="Stoetzel C."/>
            <person name="Quillet R."/>
            <person name="Dollfus H."/>
            <person name="Perrin-Schmitt F."/>
        </authorList>
    </citation>
    <scope>NUCLEOTIDE SEQUENCE [GENOMIC DNA]</scope>
    <source>
        <tissue>Hair</tissue>
    </source>
</reference>
<protein>
    <recommendedName>
        <fullName>Twist-related protein 1</fullName>
    </recommendedName>
</protein>